<keyword id="KW-0963">Cytoplasm</keyword>
<keyword id="KW-0251">Elongation factor</keyword>
<keyword id="KW-0342">GTP-binding</keyword>
<keyword id="KW-0378">Hydrolase</keyword>
<keyword id="KW-0460">Magnesium</keyword>
<keyword id="KW-0479">Metal-binding</keyword>
<keyword id="KW-0547">Nucleotide-binding</keyword>
<keyword id="KW-0648">Protein biosynthesis</keyword>
<keyword id="KW-1185">Reference proteome</keyword>
<organism>
    <name type="scientific">Mycoplasmopsis pulmonis (strain UAB CTIP)</name>
    <name type="common">Mycoplasma pulmonis</name>
    <dbReference type="NCBI Taxonomy" id="272635"/>
    <lineage>
        <taxon>Bacteria</taxon>
        <taxon>Bacillati</taxon>
        <taxon>Mycoplasmatota</taxon>
        <taxon>Mycoplasmoidales</taxon>
        <taxon>Metamycoplasmataceae</taxon>
        <taxon>Mycoplasmopsis</taxon>
    </lineage>
</organism>
<sequence>MAKLDFDRSKEHVNIGTIGHVDHGKTTLTAAIATVLSKKGLAEAKDYASIDAAPEEKARGITINTAHIEYETEKRHYAHVDCPGHADYVKNMITGAAQMDGGILVVSATDGPMPQTREHILLSKQVGVPKMVVFLNKVDMLEGEDEMIELVELEIRSLLSEYGFDGDKTPIIKGSALKALEGNPQYEKNIEELMDAVDNYIETPVKELDKPFLLAVEDVFTITGRGTVATGKVERGQLNINSEVEIVGFTEKPKKTTVTGIEMFRKNLKEAQAGDNAGLLLRGVDRNDVERGQVLAKPGSIVPHSKFEAAIYALKKEEGGRHTPFFSNYKPQFYFRTTDVTGGVVFPAGREMVMPGDNVDLVVELISPIAVEEGTKFSIREGGRTVGAGSVTKILK</sequence>
<feature type="chain" id="PRO_0000091351" description="Elongation factor Tu">
    <location>
        <begin position="1"/>
        <end position="396"/>
    </location>
</feature>
<feature type="domain" description="tr-type G">
    <location>
        <begin position="10"/>
        <end position="205"/>
    </location>
</feature>
<feature type="region of interest" description="G1" evidence="1">
    <location>
        <begin position="19"/>
        <end position="26"/>
    </location>
</feature>
<feature type="region of interest" description="G2" evidence="1">
    <location>
        <begin position="60"/>
        <end position="64"/>
    </location>
</feature>
<feature type="region of interest" description="G3" evidence="1">
    <location>
        <begin position="81"/>
        <end position="84"/>
    </location>
</feature>
<feature type="region of interest" description="G4" evidence="1">
    <location>
        <begin position="136"/>
        <end position="139"/>
    </location>
</feature>
<feature type="region of interest" description="G5" evidence="1">
    <location>
        <begin position="175"/>
        <end position="177"/>
    </location>
</feature>
<feature type="binding site" evidence="2">
    <location>
        <begin position="19"/>
        <end position="26"/>
    </location>
    <ligand>
        <name>GTP</name>
        <dbReference type="ChEBI" id="CHEBI:37565"/>
    </ligand>
</feature>
<feature type="binding site" evidence="2">
    <location>
        <position position="26"/>
    </location>
    <ligand>
        <name>Mg(2+)</name>
        <dbReference type="ChEBI" id="CHEBI:18420"/>
    </ligand>
</feature>
<feature type="binding site" evidence="2">
    <location>
        <begin position="81"/>
        <end position="85"/>
    </location>
    <ligand>
        <name>GTP</name>
        <dbReference type="ChEBI" id="CHEBI:37565"/>
    </ligand>
</feature>
<feature type="binding site" evidence="2">
    <location>
        <begin position="136"/>
        <end position="139"/>
    </location>
    <ligand>
        <name>GTP</name>
        <dbReference type="ChEBI" id="CHEBI:37565"/>
    </ligand>
</feature>
<dbReference type="EC" id="3.6.5.3" evidence="2"/>
<dbReference type="EMBL" id="AL445564">
    <property type="protein sequence ID" value="CAC13578.1"/>
    <property type="molecule type" value="Genomic_DNA"/>
</dbReference>
<dbReference type="PIR" id="E90562">
    <property type="entry name" value="E90562"/>
</dbReference>
<dbReference type="RefSeq" id="WP_010925206.1">
    <property type="nucleotide sequence ID" value="NC_002771.1"/>
</dbReference>
<dbReference type="SMR" id="Q98QG1"/>
<dbReference type="STRING" id="272635.gene:17577005"/>
<dbReference type="KEGG" id="mpu:MYPU_4050"/>
<dbReference type="eggNOG" id="COG0050">
    <property type="taxonomic scope" value="Bacteria"/>
</dbReference>
<dbReference type="HOGENOM" id="CLU_007265_0_1_14"/>
<dbReference type="BioCyc" id="MPUL272635:G1GT6-411-MONOMER"/>
<dbReference type="Proteomes" id="UP000000528">
    <property type="component" value="Chromosome"/>
</dbReference>
<dbReference type="GO" id="GO:0005829">
    <property type="term" value="C:cytosol"/>
    <property type="evidence" value="ECO:0007669"/>
    <property type="project" value="TreeGrafter"/>
</dbReference>
<dbReference type="GO" id="GO:0005525">
    <property type="term" value="F:GTP binding"/>
    <property type="evidence" value="ECO:0007669"/>
    <property type="project" value="UniProtKB-UniRule"/>
</dbReference>
<dbReference type="GO" id="GO:0003924">
    <property type="term" value="F:GTPase activity"/>
    <property type="evidence" value="ECO:0007669"/>
    <property type="project" value="InterPro"/>
</dbReference>
<dbReference type="GO" id="GO:0003746">
    <property type="term" value="F:translation elongation factor activity"/>
    <property type="evidence" value="ECO:0007669"/>
    <property type="project" value="UniProtKB-UniRule"/>
</dbReference>
<dbReference type="CDD" id="cd01884">
    <property type="entry name" value="EF_Tu"/>
    <property type="match status" value="1"/>
</dbReference>
<dbReference type="CDD" id="cd03697">
    <property type="entry name" value="EFTU_II"/>
    <property type="match status" value="1"/>
</dbReference>
<dbReference type="CDD" id="cd03707">
    <property type="entry name" value="EFTU_III"/>
    <property type="match status" value="1"/>
</dbReference>
<dbReference type="FunFam" id="2.40.30.10:FF:000001">
    <property type="entry name" value="Elongation factor Tu"/>
    <property type="match status" value="1"/>
</dbReference>
<dbReference type="FunFam" id="3.40.50.300:FF:000003">
    <property type="entry name" value="Elongation factor Tu"/>
    <property type="match status" value="1"/>
</dbReference>
<dbReference type="Gene3D" id="3.40.50.300">
    <property type="entry name" value="P-loop containing nucleotide triphosphate hydrolases"/>
    <property type="match status" value="1"/>
</dbReference>
<dbReference type="Gene3D" id="2.40.30.10">
    <property type="entry name" value="Translation factors"/>
    <property type="match status" value="2"/>
</dbReference>
<dbReference type="HAMAP" id="MF_00118_B">
    <property type="entry name" value="EF_Tu_B"/>
    <property type="match status" value="1"/>
</dbReference>
<dbReference type="InterPro" id="IPR041709">
    <property type="entry name" value="EF-Tu_GTP-bd"/>
</dbReference>
<dbReference type="InterPro" id="IPR050055">
    <property type="entry name" value="EF-Tu_GTPase"/>
</dbReference>
<dbReference type="InterPro" id="IPR004161">
    <property type="entry name" value="EFTu-like_2"/>
</dbReference>
<dbReference type="InterPro" id="IPR033720">
    <property type="entry name" value="EFTU_2"/>
</dbReference>
<dbReference type="InterPro" id="IPR031157">
    <property type="entry name" value="G_TR_CS"/>
</dbReference>
<dbReference type="InterPro" id="IPR027417">
    <property type="entry name" value="P-loop_NTPase"/>
</dbReference>
<dbReference type="InterPro" id="IPR005225">
    <property type="entry name" value="Small_GTP-bd"/>
</dbReference>
<dbReference type="InterPro" id="IPR000795">
    <property type="entry name" value="T_Tr_GTP-bd_dom"/>
</dbReference>
<dbReference type="InterPro" id="IPR009000">
    <property type="entry name" value="Transl_B-barrel_sf"/>
</dbReference>
<dbReference type="InterPro" id="IPR009001">
    <property type="entry name" value="Transl_elong_EF1A/Init_IF2_C"/>
</dbReference>
<dbReference type="InterPro" id="IPR004541">
    <property type="entry name" value="Transl_elong_EFTu/EF1A_bac/org"/>
</dbReference>
<dbReference type="InterPro" id="IPR004160">
    <property type="entry name" value="Transl_elong_EFTu/EF1A_C"/>
</dbReference>
<dbReference type="NCBIfam" id="TIGR00485">
    <property type="entry name" value="EF-Tu"/>
    <property type="match status" value="1"/>
</dbReference>
<dbReference type="NCBIfam" id="NF000766">
    <property type="entry name" value="PRK00049.1"/>
    <property type="match status" value="1"/>
</dbReference>
<dbReference type="NCBIfam" id="NF009372">
    <property type="entry name" value="PRK12735.1"/>
    <property type="match status" value="1"/>
</dbReference>
<dbReference type="NCBIfam" id="NF009373">
    <property type="entry name" value="PRK12736.1"/>
    <property type="match status" value="1"/>
</dbReference>
<dbReference type="NCBIfam" id="TIGR00231">
    <property type="entry name" value="small_GTP"/>
    <property type="match status" value="1"/>
</dbReference>
<dbReference type="PANTHER" id="PTHR43721:SF22">
    <property type="entry name" value="ELONGATION FACTOR TU, MITOCHONDRIAL"/>
    <property type="match status" value="1"/>
</dbReference>
<dbReference type="PANTHER" id="PTHR43721">
    <property type="entry name" value="ELONGATION FACTOR TU-RELATED"/>
    <property type="match status" value="1"/>
</dbReference>
<dbReference type="Pfam" id="PF00009">
    <property type="entry name" value="GTP_EFTU"/>
    <property type="match status" value="1"/>
</dbReference>
<dbReference type="Pfam" id="PF03144">
    <property type="entry name" value="GTP_EFTU_D2"/>
    <property type="match status" value="1"/>
</dbReference>
<dbReference type="Pfam" id="PF03143">
    <property type="entry name" value="GTP_EFTU_D3"/>
    <property type="match status" value="1"/>
</dbReference>
<dbReference type="PRINTS" id="PR00315">
    <property type="entry name" value="ELONGATNFCT"/>
</dbReference>
<dbReference type="SUPFAM" id="SSF50465">
    <property type="entry name" value="EF-Tu/eEF-1alpha/eIF2-gamma C-terminal domain"/>
    <property type="match status" value="1"/>
</dbReference>
<dbReference type="SUPFAM" id="SSF52540">
    <property type="entry name" value="P-loop containing nucleoside triphosphate hydrolases"/>
    <property type="match status" value="1"/>
</dbReference>
<dbReference type="SUPFAM" id="SSF50447">
    <property type="entry name" value="Translation proteins"/>
    <property type="match status" value="1"/>
</dbReference>
<dbReference type="PROSITE" id="PS00301">
    <property type="entry name" value="G_TR_1"/>
    <property type="match status" value="1"/>
</dbReference>
<dbReference type="PROSITE" id="PS51722">
    <property type="entry name" value="G_TR_2"/>
    <property type="match status" value="1"/>
</dbReference>
<reference key="1">
    <citation type="journal article" date="2001" name="Nucleic Acids Res.">
        <title>The complete genome sequence of the murine respiratory pathogen Mycoplasma pulmonis.</title>
        <authorList>
            <person name="Chambaud I."/>
            <person name="Heilig R."/>
            <person name="Ferris S."/>
            <person name="Barbe V."/>
            <person name="Samson D."/>
            <person name="Galisson F."/>
            <person name="Moszer I."/>
            <person name="Dybvig K."/>
            <person name="Wroblewski H."/>
            <person name="Viari A."/>
            <person name="Rocha E.P.C."/>
            <person name="Blanchard A."/>
        </authorList>
    </citation>
    <scope>NUCLEOTIDE SEQUENCE [LARGE SCALE GENOMIC DNA]</scope>
    <source>
        <strain>UAB CTIP</strain>
    </source>
</reference>
<gene>
    <name evidence="2" type="primary">tuf</name>
    <name type="ordered locus">MYPU_4050</name>
</gene>
<comment type="function">
    <text evidence="2">GTP hydrolase that promotes the GTP-dependent binding of aminoacyl-tRNA to the A-site of ribosomes during protein biosynthesis.</text>
</comment>
<comment type="catalytic activity">
    <reaction evidence="2">
        <text>GTP + H2O = GDP + phosphate + H(+)</text>
        <dbReference type="Rhea" id="RHEA:19669"/>
        <dbReference type="ChEBI" id="CHEBI:15377"/>
        <dbReference type="ChEBI" id="CHEBI:15378"/>
        <dbReference type="ChEBI" id="CHEBI:37565"/>
        <dbReference type="ChEBI" id="CHEBI:43474"/>
        <dbReference type="ChEBI" id="CHEBI:58189"/>
        <dbReference type="EC" id="3.6.5.3"/>
    </reaction>
    <physiologicalReaction direction="left-to-right" evidence="2">
        <dbReference type="Rhea" id="RHEA:19670"/>
    </physiologicalReaction>
</comment>
<comment type="subunit">
    <text evidence="2">Monomer.</text>
</comment>
<comment type="subcellular location">
    <subcellularLocation>
        <location evidence="2">Cytoplasm</location>
    </subcellularLocation>
</comment>
<comment type="similarity">
    <text evidence="2">Belongs to the TRAFAC class translation factor GTPase superfamily. Classic translation factor GTPase family. EF-Tu/EF-1A subfamily.</text>
</comment>
<proteinExistence type="inferred from homology"/>
<evidence type="ECO:0000250" key="1"/>
<evidence type="ECO:0000255" key="2">
    <source>
        <dbReference type="HAMAP-Rule" id="MF_00118"/>
    </source>
</evidence>
<name>EFTU_MYCPU</name>
<accession>Q98QG1</accession>
<protein>
    <recommendedName>
        <fullName evidence="2">Elongation factor Tu</fullName>
        <shortName evidence="2">EF-Tu</shortName>
        <ecNumber evidence="2">3.6.5.3</ecNumber>
    </recommendedName>
</protein>